<accession>B8F3P6</accession>
<gene>
    <name evidence="1" type="primary">mukF</name>
    <name type="ordered locus">HAPS_0259</name>
</gene>
<comment type="function">
    <text evidence="1">Involved in chromosome condensation, segregation and cell cycle progression. May participate in facilitating chromosome segregation by condensation DNA from both sides of a centrally located replisome during cell division. Not required for mini-F plasmid partitioning. Probably acts via its interaction with MukB and MukE. Overexpression results in anucleate cells. It has a calcium binding activity.</text>
</comment>
<comment type="subunit">
    <text evidence="1">Interacts, and probably forms a ternary complex, with MukE and MukB via its C-terminal region. The complex formation is stimulated by calcium or magnesium. It is required for an interaction between MukE and MukB.</text>
</comment>
<comment type="subcellular location">
    <subcellularLocation>
        <location evidence="1">Cytoplasm</location>
        <location evidence="1">Nucleoid</location>
    </subcellularLocation>
    <text evidence="1">Restricted to the nucleoid region.</text>
</comment>
<comment type="similarity">
    <text evidence="1">Belongs to the MukF family.</text>
</comment>
<protein>
    <recommendedName>
        <fullName evidence="1">Chromosome partition protein MukF</fullName>
    </recommendedName>
</protein>
<organism>
    <name type="scientific">Glaesserella parasuis serovar 5 (strain SH0165)</name>
    <name type="common">Haemophilus parasuis</name>
    <dbReference type="NCBI Taxonomy" id="557723"/>
    <lineage>
        <taxon>Bacteria</taxon>
        <taxon>Pseudomonadati</taxon>
        <taxon>Pseudomonadota</taxon>
        <taxon>Gammaproteobacteria</taxon>
        <taxon>Pasteurellales</taxon>
        <taxon>Pasteurellaceae</taxon>
        <taxon>Glaesserella</taxon>
    </lineage>
</organism>
<feature type="chain" id="PRO_1000187510" description="Chromosome partition protein MukF">
    <location>
        <begin position="1"/>
        <end position="443"/>
    </location>
</feature>
<feature type="region of interest" description="Leucine-zipper">
    <location>
        <begin position="209"/>
        <end position="237"/>
    </location>
</feature>
<sequence length="443" mass="51070">MQHELAQTIPELILWTKEREFSLSLSSDRLAFLLAIALYNNERTDGELLESDLQDIFRHVSNAFEQSEATQTQRANNAINDLVKQRFLNRFSSEFTEGLAIYRLTPLGVGVSEYYIRQREFSTLRLSIQLSIVADEIQRASNAAEEGGDERFWRNQVFAPLKFSVAEIFDSIDLSQRMMDENQQQIRERIAMLLSQNWHEAIATCQQLLDETSGNLRELQDVLNASGDKLQSQLLRIQSCLIGRDDLDFVDQLIVNLQNKLDRIISWGQQAIDLWIGYDRHVHKFIRTAIDMDKNRVFGQRLRQSIQDYFESPWQLYIAKAEPLLDLRDDETELNEAEAVGELPTELEYESLTQVQEQIIATMQAHLAPFREQGKPIDLGAILREQLAMYPLSRHFDVARIIVDQAVKLGMASQDSQAIYPEWQSINDNGAEVQANVIDQYNK</sequence>
<dbReference type="EMBL" id="CP001321">
    <property type="protein sequence ID" value="ACL31948.1"/>
    <property type="molecule type" value="Genomic_DNA"/>
</dbReference>
<dbReference type="RefSeq" id="WP_012621635.1">
    <property type="nucleotide sequence ID" value="NC_011852.1"/>
</dbReference>
<dbReference type="SMR" id="B8F3P6"/>
<dbReference type="STRING" id="557723.HAPS_0259"/>
<dbReference type="KEGG" id="hap:HAPS_0259"/>
<dbReference type="PATRIC" id="fig|557723.8.peg.266"/>
<dbReference type="HOGENOM" id="CLU_049853_0_0_6"/>
<dbReference type="Proteomes" id="UP000006743">
    <property type="component" value="Chromosome"/>
</dbReference>
<dbReference type="GO" id="GO:0005737">
    <property type="term" value="C:cytoplasm"/>
    <property type="evidence" value="ECO:0007669"/>
    <property type="project" value="UniProtKB-UniRule"/>
</dbReference>
<dbReference type="GO" id="GO:0009295">
    <property type="term" value="C:nucleoid"/>
    <property type="evidence" value="ECO:0007669"/>
    <property type="project" value="UniProtKB-SubCell"/>
</dbReference>
<dbReference type="GO" id="GO:0005509">
    <property type="term" value="F:calcium ion binding"/>
    <property type="evidence" value="ECO:0007669"/>
    <property type="project" value="UniProtKB-UniRule"/>
</dbReference>
<dbReference type="GO" id="GO:0051301">
    <property type="term" value="P:cell division"/>
    <property type="evidence" value="ECO:0007669"/>
    <property type="project" value="UniProtKB-KW"/>
</dbReference>
<dbReference type="GO" id="GO:0030261">
    <property type="term" value="P:chromosome condensation"/>
    <property type="evidence" value="ECO:0007669"/>
    <property type="project" value="UniProtKB-KW"/>
</dbReference>
<dbReference type="GO" id="GO:0007059">
    <property type="term" value="P:chromosome segregation"/>
    <property type="evidence" value="ECO:0007669"/>
    <property type="project" value="UniProtKB-UniRule"/>
</dbReference>
<dbReference type="GO" id="GO:0006260">
    <property type="term" value="P:DNA replication"/>
    <property type="evidence" value="ECO:0007669"/>
    <property type="project" value="UniProtKB-UniRule"/>
</dbReference>
<dbReference type="CDD" id="cd16337">
    <property type="entry name" value="MukF_C"/>
    <property type="match status" value="1"/>
</dbReference>
<dbReference type="CDD" id="cd16335">
    <property type="entry name" value="MukF_N"/>
    <property type="match status" value="1"/>
</dbReference>
<dbReference type="Gene3D" id="1.20.58.590">
    <property type="entry name" value="Chromosome partition protein MukF, middle domain"/>
    <property type="match status" value="1"/>
</dbReference>
<dbReference type="Gene3D" id="1.10.225.40">
    <property type="entry name" value="MukF, C-terminal domain"/>
    <property type="match status" value="1"/>
</dbReference>
<dbReference type="Gene3D" id="1.10.10.10">
    <property type="entry name" value="Winged helix-like DNA-binding domain superfamily/Winged helix DNA-binding domain"/>
    <property type="match status" value="1"/>
</dbReference>
<dbReference type="HAMAP" id="MF_01803">
    <property type="entry name" value="MukF"/>
    <property type="match status" value="1"/>
</dbReference>
<dbReference type="InterPro" id="IPR005582">
    <property type="entry name" value="Chromosome_partition_MukF"/>
</dbReference>
<dbReference type="InterPro" id="IPR033441">
    <property type="entry name" value="MukF_C"/>
</dbReference>
<dbReference type="InterPro" id="IPR038198">
    <property type="entry name" value="MukF_C_sf"/>
</dbReference>
<dbReference type="InterPro" id="IPR033440">
    <property type="entry name" value="MukF_M"/>
</dbReference>
<dbReference type="InterPro" id="IPR036141">
    <property type="entry name" value="MukF_M_sp"/>
</dbReference>
<dbReference type="InterPro" id="IPR033439">
    <property type="entry name" value="MukF_WHTH"/>
</dbReference>
<dbReference type="InterPro" id="IPR036388">
    <property type="entry name" value="WH-like_DNA-bd_sf"/>
</dbReference>
<dbReference type="InterPro" id="IPR036390">
    <property type="entry name" value="WH_DNA-bd_sf"/>
</dbReference>
<dbReference type="NCBIfam" id="NF003615">
    <property type="entry name" value="PRK05260.1"/>
    <property type="match status" value="1"/>
</dbReference>
<dbReference type="Pfam" id="PF03882">
    <property type="entry name" value="KicB"/>
    <property type="match status" value="1"/>
</dbReference>
<dbReference type="Pfam" id="PF17193">
    <property type="entry name" value="MukF_C"/>
    <property type="match status" value="1"/>
</dbReference>
<dbReference type="Pfam" id="PF17192">
    <property type="entry name" value="MukF_M"/>
    <property type="match status" value="1"/>
</dbReference>
<dbReference type="PIRSF" id="PIRSF018282">
    <property type="entry name" value="MukF"/>
    <property type="match status" value="1"/>
</dbReference>
<dbReference type="SUPFAM" id="SSF140570">
    <property type="entry name" value="MukF C-terminal domain-like"/>
    <property type="match status" value="1"/>
</dbReference>
<dbReference type="SUPFAM" id="SSF46785">
    <property type="entry name" value="Winged helix' DNA-binding domain"/>
    <property type="match status" value="1"/>
</dbReference>
<proteinExistence type="inferred from homology"/>
<reference key="1">
    <citation type="journal article" date="2009" name="J. Bacteriol.">
        <title>Complete genome sequence of Haemophilus parasuis SH0165.</title>
        <authorList>
            <person name="Yue M."/>
            <person name="Yang F."/>
            <person name="Yang J."/>
            <person name="Bei W."/>
            <person name="Cai X."/>
            <person name="Chen L."/>
            <person name="Dong J."/>
            <person name="Zhou R."/>
            <person name="Jin M."/>
            <person name="Jin Q."/>
            <person name="Chen H."/>
        </authorList>
    </citation>
    <scope>NUCLEOTIDE SEQUENCE [LARGE SCALE GENOMIC DNA]</scope>
    <source>
        <strain>SH0165</strain>
    </source>
</reference>
<evidence type="ECO:0000255" key="1">
    <source>
        <dbReference type="HAMAP-Rule" id="MF_01803"/>
    </source>
</evidence>
<keyword id="KW-0106">Calcium</keyword>
<keyword id="KW-0131">Cell cycle</keyword>
<keyword id="KW-0132">Cell division</keyword>
<keyword id="KW-0159">Chromosome partition</keyword>
<keyword id="KW-0963">Cytoplasm</keyword>
<keyword id="KW-0226">DNA condensation</keyword>
<keyword id="KW-1185">Reference proteome</keyword>
<name>MUKF_GLAP5</name>